<name>RS14_ENCCU</name>
<organism>
    <name type="scientific">Encephalitozoon cuniculi (strain GB-M1)</name>
    <name type="common">Microsporidian parasite</name>
    <dbReference type="NCBI Taxonomy" id="284813"/>
    <lineage>
        <taxon>Eukaryota</taxon>
        <taxon>Fungi</taxon>
        <taxon>Fungi incertae sedis</taxon>
        <taxon>Microsporidia</taxon>
        <taxon>Unikaryonidae</taxon>
        <taxon>Encephalitozoon</taxon>
    </lineage>
</organism>
<sequence>MTEQIESMELAAVAHIKATKNDTFVHITDMTGSETIAKITGGMRVKAQRDEGSPYAAMLAAQDVATKILGRGVKVLHFKLRGAGGVKPMALGPGAQTAIRTLIRAGLRVGRIEDVTPVARDRVRKRGGHRGRRV</sequence>
<proteinExistence type="evidence at protein level"/>
<reference key="1">
    <citation type="journal article" date="2001" name="Nature">
        <title>Genome sequence and gene compaction of the eukaryote parasite Encephalitozoon cuniculi.</title>
        <authorList>
            <person name="Katinka M.D."/>
            <person name="Duprat S."/>
            <person name="Cornillot E."/>
            <person name="Metenier G."/>
            <person name="Thomarat F."/>
            <person name="Prensier G."/>
            <person name="Barbe V."/>
            <person name="Peyretaillade E."/>
            <person name="Brottier P."/>
            <person name="Wincker P."/>
            <person name="Delbac F."/>
            <person name="El Alaoui H."/>
            <person name="Peyret P."/>
            <person name="Saurin W."/>
            <person name="Gouy M."/>
            <person name="Weissenbach J."/>
            <person name="Vivares C.P."/>
        </authorList>
    </citation>
    <scope>NUCLEOTIDE SEQUENCE [LARGE SCALE GENOMIC DNA]</scope>
    <source>
        <strain>GB-M1</strain>
    </source>
</reference>
<reference key="2">
    <citation type="journal article" date="2006" name="Proteomics">
        <title>Proteomic analysis of the eukaryotic parasite Encephalitozoon cuniculi (microsporidia): a reference map for proteins expressed in late sporogonial stages.</title>
        <authorList>
            <person name="Brosson D."/>
            <person name="Kuhn L."/>
            <person name="Delbac F."/>
            <person name="Garin J."/>
            <person name="Vivares C.P."/>
            <person name="Texier C."/>
        </authorList>
    </citation>
    <scope>IDENTIFICATION BY MASS SPECTROMETRY [LARGE SCALE ANALYSIS]</scope>
    <scope>DEVELOPMENTAL STAGE</scope>
</reference>
<gene>
    <name type="primary">RPS14</name>
    <name type="ordered locus">ECU03_0650</name>
</gene>
<evidence type="ECO:0000250" key="1"/>
<evidence type="ECO:0000269" key="2">
    <source>
    </source>
</evidence>
<evidence type="ECO:0000305" key="3"/>
<protein>
    <recommendedName>
        <fullName evidence="3">Small ribosomal subunit protein uS11</fullName>
    </recommendedName>
    <alternativeName>
        <fullName>40S ribosomal protein S14</fullName>
    </alternativeName>
</protein>
<feature type="chain" id="PRO_0000383133" description="Small ribosomal subunit protein uS11">
    <location>
        <begin position="1"/>
        <end position="134"/>
    </location>
</feature>
<dbReference type="EMBL" id="AL590443">
    <property type="protein sequence ID" value="CAD26211.1"/>
    <property type="molecule type" value="Genomic_DNA"/>
</dbReference>
<dbReference type="RefSeq" id="NP_597576.1">
    <property type="nucleotide sequence ID" value="NM_001040940.1"/>
</dbReference>
<dbReference type="PDB" id="7QEP">
    <property type="method" value="EM"/>
    <property type="resolution" value="2.70 A"/>
    <property type="chains" value="C4=1-134"/>
</dbReference>
<dbReference type="PDBsum" id="7QEP"/>
<dbReference type="EMDB" id="EMD-13936"/>
<dbReference type="SMR" id="Q8SSA6"/>
<dbReference type="FunCoup" id="Q8SSA6">
    <property type="interactions" value="165"/>
</dbReference>
<dbReference type="STRING" id="284813.Q8SSA6"/>
<dbReference type="GeneID" id="858738"/>
<dbReference type="KEGG" id="ecu:ECU03_0650"/>
<dbReference type="VEuPathDB" id="MicrosporidiaDB:ECU03_0650"/>
<dbReference type="HOGENOM" id="CLU_072439_6_0_1"/>
<dbReference type="InParanoid" id="Q8SSA6"/>
<dbReference type="OMA" id="IYASHND"/>
<dbReference type="OrthoDB" id="1677536at2759"/>
<dbReference type="Proteomes" id="UP000000819">
    <property type="component" value="Chromosome III"/>
</dbReference>
<dbReference type="GO" id="GO:0005737">
    <property type="term" value="C:cytoplasm"/>
    <property type="evidence" value="ECO:0007669"/>
    <property type="project" value="UniProtKB-SubCell"/>
</dbReference>
<dbReference type="GO" id="GO:1990904">
    <property type="term" value="C:ribonucleoprotein complex"/>
    <property type="evidence" value="ECO:0007669"/>
    <property type="project" value="UniProtKB-KW"/>
</dbReference>
<dbReference type="GO" id="GO:0005840">
    <property type="term" value="C:ribosome"/>
    <property type="evidence" value="ECO:0007669"/>
    <property type="project" value="UniProtKB-KW"/>
</dbReference>
<dbReference type="GO" id="GO:0003735">
    <property type="term" value="F:structural constituent of ribosome"/>
    <property type="evidence" value="ECO:0007669"/>
    <property type="project" value="InterPro"/>
</dbReference>
<dbReference type="GO" id="GO:0006412">
    <property type="term" value="P:translation"/>
    <property type="evidence" value="ECO:0007669"/>
    <property type="project" value="InterPro"/>
</dbReference>
<dbReference type="FunFam" id="3.30.420.80:FF:000018">
    <property type="entry name" value="40S ribosomal protein S14"/>
    <property type="match status" value="1"/>
</dbReference>
<dbReference type="Gene3D" id="3.30.420.80">
    <property type="entry name" value="Ribosomal protein S11"/>
    <property type="match status" value="1"/>
</dbReference>
<dbReference type="HAMAP" id="MF_01310">
    <property type="entry name" value="Ribosomal_uS11"/>
    <property type="match status" value="1"/>
</dbReference>
<dbReference type="InterPro" id="IPR001971">
    <property type="entry name" value="Ribosomal_uS11"/>
</dbReference>
<dbReference type="InterPro" id="IPR036967">
    <property type="entry name" value="Ribosomal_uS11_sf"/>
</dbReference>
<dbReference type="PANTHER" id="PTHR11759">
    <property type="entry name" value="40S RIBOSOMAL PROTEIN S14/30S RIBOSOMAL PROTEIN S11"/>
    <property type="match status" value="1"/>
</dbReference>
<dbReference type="Pfam" id="PF00411">
    <property type="entry name" value="Ribosomal_S11"/>
    <property type="match status" value="1"/>
</dbReference>
<dbReference type="PIRSF" id="PIRSF002131">
    <property type="entry name" value="Ribosomal_S11"/>
    <property type="match status" value="1"/>
</dbReference>
<dbReference type="SUPFAM" id="SSF53137">
    <property type="entry name" value="Translational machinery components"/>
    <property type="match status" value="1"/>
</dbReference>
<accession>Q8SSA6</accession>
<keyword id="KW-0002">3D-structure</keyword>
<keyword id="KW-0963">Cytoplasm</keyword>
<keyword id="KW-1185">Reference proteome</keyword>
<keyword id="KW-0687">Ribonucleoprotein</keyword>
<keyword id="KW-0689">Ribosomal protein</keyword>
<comment type="subunit">
    <text evidence="1">Component of the small ribosomal subunit.</text>
</comment>
<comment type="subcellular location">
    <subcellularLocation>
        <location evidence="1">Cytoplasm</location>
    </subcellularLocation>
</comment>
<comment type="developmental stage">
    <text evidence="2">Expressed in late sporogonial stages.</text>
</comment>
<comment type="similarity">
    <text evidence="3">Belongs to the universal ribosomal protein uS11 family.</text>
</comment>